<comment type="function">
    <text evidence="1">Extracellular aminopeptidase which contributes to pathogenicity.</text>
</comment>
<comment type="cofactor">
    <cofactor evidence="1">
        <name>Zn(2+)</name>
        <dbReference type="ChEBI" id="CHEBI:29105"/>
    </cofactor>
    <text evidence="1">Binds 2 Zn(2+) ions per subunit.</text>
</comment>
<comment type="subunit">
    <text evidence="1">Monomer.</text>
</comment>
<comment type="subcellular location">
    <subcellularLocation>
        <location evidence="1">Secreted</location>
    </subcellularLocation>
</comment>
<comment type="similarity">
    <text evidence="3">Belongs to the peptidase M28 family. M28E subfamily.</text>
</comment>
<name>LAP1_TRIEQ</name>
<organism>
    <name type="scientific">Trichophyton equinum</name>
    <name type="common">Horse ringworm fungus</name>
    <dbReference type="NCBI Taxonomy" id="63418"/>
    <lineage>
        <taxon>Eukaryota</taxon>
        <taxon>Fungi</taxon>
        <taxon>Dikarya</taxon>
        <taxon>Ascomycota</taxon>
        <taxon>Pezizomycotina</taxon>
        <taxon>Eurotiomycetes</taxon>
        <taxon>Eurotiomycetidae</taxon>
        <taxon>Onygenales</taxon>
        <taxon>Arthrodermataceae</taxon>
        <taxon>Trichophyton</taxon>
    </lineage>
</organism>
<dbReference type="EC" id="3.4.11.-"/>
<dbReference type="EMBL" id="EU072469">
    <property type="protein sequence ID" value="ABU49646.1"/>
    <property type="molecule type" value="Genomic_DNA"/>
</dbReference>
<dbReference type="SMR" id="A7UI11"/>
<dbReference type="MEROPS" id="M28.022"/>
<dbReference type="GlyCosmos" id="A7UI11">
    <property type="glycosylation" value="3 sites, No reported glycans"/>
</dbReference>
<dbReference type="VEuPathDB" id="FungiDB:TEQG_06332"/>
<dbReference type="GO" id="GO:0005576">
    <property type="term" value="C:extracellular region"/>
    <property type="evidence" value="ECO:0007669"/>
    <property type="project" value="UniProtKB-SubCell"/>
</dbReference>
<dbReference type="GO" id="GO:0004177">
    <property type="term" value="F:aminopeptidase activity"/>
    <property type="evidence" value="ECO:0007669"/>
    <property type="project" value="UniProtKB-KW"/>
</dbReference>
<dbReference type="GO" id="GO:0046872">
    <property type="term" value="F:metal ion binding"/>
    <property type="evidence" value="ECO:0007669"/>
    <property type="project" value="UniProtKB-KW"/>
</dbReference>
<dbReference type="GO" id="GO:0008235">
    <property type="term" value="F:metalloexopeptidase activity"/>
    <property type="evidence" value="ECO:0007669"/>
    <property type="project" value="InterPro"/>
</dbReference>
<dbReference type="GO" id="GO:0006508">
    <property type="term" value="P:proteolysis"/>
    <property type="evidence" value="ECO:0007669"/>
    <property type="project" value="UniProtKB-KW"/>
</dbReference>
<dbReference type="CDD" id="cd03879">
    <property type="entry name" value="M28_AAP"/>
    <property type="match status" value="1"/>
</dbReference>
<dbReference type="FunFam" id="3.40.630.10:FF:000042">
    <property type="entry name" value="Peptide hydrolase"/>
    <property type="match status" value="1"/>
</dbReference>
<dbReference type="Gene3D" id="3.40.630.10">
    <property type="entry name" value="Zn peptidases"/>
    <property type="match status" value="1"/>
</dbReference>
<dbReference type="InterPro" id="IPR045175">
    <property type="entry name" value="M28_fam"/>
</dbReference>
<dbReference type="InterPro" id="IPR007484">
    <property type="entry name" value="Peptidase_M28"/>
</dbReference>
<dbReference type="PANTHER" id="PTHR12147:SF56">
    <property type="entry name" value="AMINOPEPTIDASE YDR415C-RELATED"/>
    <property type="match status" value="1"/>
</dbReference>
<dbReference type="PANTHER" id="PTHR12147">
    <property type="entry name" value="METALLOPEPTIDASE M28 FAMILY MEMBER"/>
    <property type="match status" value="1"/>
</dbReference>
<dbReference type="Pfam" id="PF04389">
    <property type="entry name" value="Peptidase_M28"/>
    <property type="match status" value="1"/>
</dbReference>
<dbReference type="SUPFAM" id="SSF53187">
    <property type="entry name" value="Zn-dependent exopeptidases"/>
    <property type="match status" value="1"/>
</dbReference>
<evidence type="ECO:0000250" key="1"/>
<evidence type="ECO:0000255" key="2"/>
<evidence type="ECO:0000305" key="3"/>
<keyword id="KW-0031">Aminopeptidase</keyword>
<keyword id="KW-1015">Disulfide bond</keyword>
<keyword id="KW-0325">Glycoprotein</keyword>
<keyword id="KW-0378">Hydrolase</keyword>
<keyword id="KW-0479">Metal-binding</keyword>
<keyword id="KW-0645">Protease</keyword>
<keyword id="KW-0964">Secreted</keyword>
<keyword id="KW-0732">Signal</keyword>
<keyword id="KW-0843">Virulence</keyword>
<keyword id="KW-0862">Zinc</keyword>
<reference key="1">
    <citation type="submission" date="2007-07" db="EMBL/GenBank/DDBJ databases">
        <title>Comparing putative pathogenicity factors between Trichophyton tonsurans and Trichophyton equinum.</title>
        <authorList>
            <person name="Brown J.T."/>
            <person name="Preuett B.L."/>
            <person name="Abdel-Rahman S.M."/>
        </authorList>
    </citation>
    <scope>NUCLEOTIDE SEQUENCE [GENOMIC DNA]</scope>
</reference>
<protein>
    <recommendedName>
        <fullName>Leucine aminopeptidase 1</fullName>
        <ecNumber>3.4.11.-</ecNumber>
    </recommendedName>
    <alternativeName>
        <fullName>Leucyl aminopeptidase 1</fullName>
        <shortName>LAP1</shortName>
    </alternativeName>
</protein>
<accession>A7UI11</accession>
<feature type="signal peptide" evidence="2">
    <location>
        <begin position="1"/>
        <end position="18"/>
    </location>
</feature>
<feature type="chain" id="PRO_0000384099" description="Leucine aminopeptidase 1">
    <location>
        <begin position="19"/>
        <end position="373"/>
    </location>
</feature>
<feature type="binding site" evidence="1">
    <location>
        <position position="176"/>
    </location>
    <ligand>
        <name>Zn(2+)</name>
        <dbReference type="ChEBI" id="CHEBI:29105"/>
        <label>1</label>
    </ligand>
</feature>
<feature type="binding site" evidence="1">
    <location>
        <position position="195"/>
    </location>
    <ligand>
        <name>Zn(2+)</name>
        <dbReference type="ChEBI" id="CHEBI:29105"/>
        <label>1</label>
    </ligand>
</feature>
<feature type="binding site" evidence="1">
    <location>
        <position position="195"/>
    </location>
    <ligand>
        <name>Zn(2+)</name>
        <dbReference type="ChEBI" id="CHEBI:29105"/>
        <label>2</label>
        <note>catalytic</note>
    </ligand>
</feature>
<feature type="binding site" evidence="1">
    <location>
        <position position="234"/>
    </location>
    <ligand>
        <name>Zn(2+)</name>
        <dbReference type="ChEBI" id="CHEBI:29105"/>
        <label>2</label>
        <note>catalytic</note>
    </ligand>
</feature>
<feature type="binding site" evidence="1">
    <location>
        <position position="261"/>
    </location>
    <ligand>
        <name>Zn(2+)</name>
        <dbReference type="ChEBI" id="CHEBI:29105"/>
        <label>1</label>
    </ligand>
</feature>
<feature type="binding site" evidence="1">
    <location>
        <position position="343"/>
    </location>
    <ligand>
        <name>Zn(2+)</name>
        <dbReference type="ChEBI" id="CHEBI:29105"/>
        <label>2</label>
        <note>catalytic</note>
    </ligand>
</feature>
<feature type="glycosylation site" description="N-linked (GlcNAc...) asparagine" evidence="2">
    <location>
        <position position="136"/>
    </location>
</feature>
<feature type="glycosylation site" description="N-linked (GlcNAc...) asparagine" evidence="2">
    <location>
        <position position="196"/>
    </location>
</feature>
<feature type="glycosylation site" description="N-linked (GlcNAc...) asparagine" evidence="2">
    <location>
        <position position="284"/>
    </location>
</feature>
<feature type="disulfide bond" evidence="1">
    <location>
        <begin position="310"/>
        <end position="314"/>
    </location>
</feature>
<proteinExistence type="inferred from homology"/>
<sequence length="373" mass="40677">MKLLSVLALSATATSVLGASIPVDTRAQKFLIELAPGETRWVTEEEKWELKQKGQDFFDITDEEVGFTAAVAQPAIAYPTSIRHADAVNAMIATLSKENMQRDLTKLSSFHNRYYKSDYGKQSATWLQQQVQAVINSSGASRYGAKVVSVRHNFVQHSIVATIPGRSPEIVVVGAHQDSINQRSPMTGRAPGADDNGSGSVTILEALRGVLQDQTIVQGKAANTIEFHWYAGEEAGLLGSQAIFANYKQTGKKVKGMLNQDMTGYIKGMVDRGLKVSFGIITDNVSTSLTSFIRMVITKYCSIPTIDTRCGYACSDHASANRNGYPSAMVAESPINLLDPHLHTDSDLISYLDFDHMIEHAKLVVGFVTELAK</sequence>
<gene>
    <name type="primary">LAP1</name>
</gene>